<protein>
    <recommendedName>
        <fullName evidence="1">DNA-directed RNA polymerase subunit beta'</fullName>
        <shortName evidence="1">RNAP subunit beta'</shortName>
        <ecNumber evidence="1">2.7.7.6</ecNumber>
    </recommendedName>
    <alternativeName>
        <fullName evidence="1">RNA polymerase subunit beta'</fullName>
    </alternativeName>
    <alternativeName>
        <fullName evidence="1">Transcriptase subunit beta'</fullName>
    </alternativeName>
</protein>
<sequence>MKDLLNFLKAQHKTEEFDAIKIGLSSPDMIRSWSFGEVKKPETINYRTFKPERDGLFCARIFGPVKDYECLCGKYKRLKHRGVICEKCGVEVTQTKVRRDRMGHIELASPVAHIWFLKSLPSRIGLLMDIPLRDIERVLYFEMYVVTEPGMTDLEKSQMLTEEEYLDRLEEWGDEFTAKMGAEAIKDLLGSMDLHAEVEQMREELDTTNSETKRKKLTKRLKLVEAFISSGNNPEWMILTVLPVLPPDLRPLVPLDGGRFATSDLNDLYRRVINRNNRLKRLLELAAPDIIVRNEKRMLQESVDALLDNGRRGRAITGSNKRPLKSLADMIKGKQGRFRQNLLGKRVDYSGRSVITVGPYLRLHQCGLPKKMALELFKPFIYSKLETRGLATTIKAAKKMVEREEAVVWDILDEVIREHPVLLNRAPTLHRLGIQAFEPVLIEGKAIQLHPLVCAAYNADFDGDQMAVHVPLTLEAQLEARTLMMSTNNILSPASGDPIIVPSQDVVLGLYYMTREMINAKGEGMYLAGPAEAEKAYRTKTAALHARVKVRITETVVDEDGHSTTETKMVDTTIGRAMLWQIVPKGLPFSIVNQKLGKKQISNLLNEAYRKLGLKDTVIFADQIMYTGFAYAALSGVSVGIDDMVVPPAKYTEIAEAEEEVREIQEQYQSGLVTAGERYNKVIDIWASTNDRVAKAMMENLSSETVINRDGEEEQQESFNSIYMMADSGARGSAAQIRQLAGMRGLMARPDGSIIETPITANFKEGLNVLQYFISTHGARKGLADTALKTANSGYLTRRLVDVAQDVVVTEHDCGTLEGVEMMPHIEGGDVKVALTELALGRVVAEDIVKPGTEEILIPRNTLLDEKWCQIINDNSVDKITVRSVVTCDSDFGCCAQCYGRDLARGHLVNQGEAVGVIAAQSIGEPGTQLTMRTFHIGGAASTAAAENSVQVKNNGSVKLNNAKFVINKDGKLVITSRASELTIIDEFGRTKEKHKLPYGSSLSKADGDAVTAGETVANWEAHTMPIITEVAGRVQFVDMIDGVTVSRQTDDLTGLSSSEVTDAAARPAAGKDMRPAIKLVDAAGNDVMIPGTDMPAQYFLPGKAIVNIEDGAEVGIGDTLARIPQKSGGNKDITGGLPRVADLFEARKPKEPAILAEYSGTVSFGKETKGKRRLIITREGGETYEEMIPKHRQLNVFEGERVERGDVIADGPEAPHDILRLRGIHAVTQYIANEVQEVYRLQGVKINDKHIETIVRQMLRKCTITHAGDSEFLPGETVEYSQVKIANRNLEAEGKEPARFERELLGITKASLATESFISAASFQETTRVLTEAAVSGKRDDLRGLKENVIVGRLIPAGTGFAYHQDRQAKRAQEQEGPSAAQATDNLAALLNAGFSSDE</sequence>
<name>RPOC_VIBVU</name>
<comment type="function">
    <text evidence="1">DNA-dependent RNA polymerase catalyzes the transcription of DNA into RNA using the four ribonucleoside triphosphates as substrates.</text>
</comment>
<comment type="catalytic activity">
    <reaction evidence="1">
        <text>RNA(n) + a ribonucleoside 5'-triphosphate = RNA(n+1) + diphosphate</text>
        <dbReference type="Rhea" id="RHEA:21248"/>
        <dbReference type="Rhea" id="RHEA-COMP:14527"/>
        <dbReference type="Rhea" id="RHEA-COMP:17342"/>
        <dbReference type="ChEBI" id="CHEBI:33019"/>
        <dbReference type="ChEBI" id="CHEBI:61557"/>
        <dbReference type="ChEBI" id="CHEBI:140395"/>
        <dbReference type="EC" id="2.7.7.6"/>
    </reaction>
</comment>
<comment type="cofactor">
    <cofactor evidence="1">
        <name>Mg(2+)</name>
        <dbReference type="ChEBI" id="CHEBI:18420"/>
    </cofactor>
    <text evidence="1">Binds 1 Mg(2+) ion per subunit.</text>
</comment>
<comment type="cofactor">
    <cofactor evidence="1">
        <name>Zn(2+)</name>
        <dbReference type="ChEBI" id="CHEBI:29105"/>
    </cofactor>
    <text evidence="1">Binds 2 Zn(2+) ions per subunit.</text>
</comment>
<comment type="subunit">
    <text evidence="1">The RNAP catalytic core consists of 2 alpha, 1 beta, 1 beta' and 1 omega subunit. When a sigma factor is associated with the core the holoenzyme is formed, which can initiate transcription.</text>
</comment>
<comment type="similarity">
    <text evidence="1">Belongs to the RNA polymerase beta' chain family.</text>
</comment>
<reference key="1">
    <citation type="submission" date="2002-12" db="EMBL/GenBank/DDBJ databases">
        <title>Complete genome sequence of Vibrio vulnificus CMCP6.</title>
        <authorList>
            <person name="Rhee J.H."/>
            <person name="Kim S.Y."/>
            <person name="Chung S.S."/>
            <person name="Kim J.J."/>
            <person name="Moon Y.H."/>
            <person name="Jeong H."/>
            <person name="Choy H.E."/>
        </authorList>
    </citation>
    <scope>NUCLEOTIDE SEQUENCE [LARGE SCALE GENOMIC DNA]</scope>
    <source>
        <strain>CMCP6</strain>
    </source>
</reference>
<dbReference type="EC" id="2.7.7.6" evidence="1"/>
<dbReference type="EMBL" id="AE016795">
    <property type="protein sequence ID" value="AAO09672.1"/>
    <property type="molecule type" value="Genomic_DNA"/>
</dbReference>
<dbReference type="RefSeq" id="WP_011079202.1">
    <property type="nucleotide sequence ID" value="NC_004459.3"/>
</dbReference>
<dbReference type="SMR" id="Q8DD19"/>
<dbReference type="KEGG" id="vvu:VV1_1212"/>
<dbReference type="HOGENOM" id="CLU_000524_3_1_6"/>
<dbReference type="Proteomes" id="UP000002275">
    <property type="component" value="Chromosome 1"/>
</dbReference>
<dbReference type="GO" id="GO:0000428">
    <property type="term" value="C:DNA-directed RNA polymerase complex"/>
    <property type="evidence" value="ECO:0007669"/>
    <property type="project" value="UniProtKB-KW"/>
</dbReference>
<dbReference type="GO" id="GO:0003677">
    <property type="term" value="F:DNA binding"/>
    <property type="evidence" value="ECO:0007669"/>
    <property type="project" value="UniProtKB-UniRule"/>
</dbReference>
<dbReference type="GO" id="GO:0003899">
    <property type="term" value="F:DNA-directed RNA polymerase activity"/>
    <property type="evidence" value="ECO:0007669"/>
    <property type="project" value="UniProtKB-UniRule"/>
</dbReference>
<dbReference type="GO" id="GO:0000287">
    <property type="term" value="F:magnesium ion binding"/>
    <property type="evidence" value="ECO:0007669"/>
    <property type="project" value="UniProtKB-UniRule"/>
</dbReference>
<dbReference type="GO" id="GO:0008270">
    <property type="term" value="F:zinc ion binding"/>
    <property type="evidence" value="ECO:0007669"/>
    <property type="project" value="UniProtKB-UniRule"/>
</dbReference>
<dbReference type="GO" id="GO:0006351">
    <property type="term" value="P:DNA-templated transcription"/>
    <property type="evidence" value="ECO:0007669"/>
    <property type="project" value="UniProtKB-UniRule"/>
</dbReference>
<dbReference type="CDD" id="cd02655">
    <property type="entry name" value="RNAP_beta'_C"/>
    <property type="match status" value="1"/>
</dbReference>
<dbReference type="CDD" id="cd01609">
    <property type="entry name" value="RNAP_beta'_N"/>
    <property type="match status" value="1"/>
</dbReference>
<dbReference type="FunFam" id="1.10.132.30:FF:000003">
    <property type="entry name" value="DNA-directed RNA polymerase subunit beta"/>
    <property type="match status" value="1"/>
</dbReference>
<dbReference type="FunFam" id="1.10.150.390:FF:000002">
    <property type="entry name" value="DNA-directed RNA polymerase subunit beta"/>
    <property type="match status" value="1"/>
</dbReference>
<dbReference type="FunFam" id="1.10.40.90:FF:000001">
    <property type="entry name" value="DNA-directed RNA polymerase subunit beta"/>
    <property type="match status" value="1"/>
</dbReference>
<dbReference type="FunFam" id="2.40.50.100:FF:000016">
    <property type="entry name" value="DNA-directed RNA polymerase subunit beta"/>
    <property type="match status" value="1"/>
</dbReference>
<dbReference type="FunFam" id="4.10.860.120:FF:000001">
    <property type="entry name" value="DNA-directed RNA polymerase subunit beta"/>
    <property type="match status" value="1"/>
</dbReference>
<dbReference type="Gene3D" id="1.10.132.30">
    <property type="match status" value="1"/>
</dbReference>
<dbReference type="Gene3D" id="1.10.150.390">
    <property type="match status" value="1"/>
</dbReference>
<dbReference type="Gene3D" id="1.10.1790.20">
    <property type="match status" value="1"/>
</dbReference>
<dbReference type="Gene3D" id="1.10.40.90">
    <property type="match status" value="1"/>
</dbReference>
<dbReference type="Gene3D" id="2.40.40.20">
    <property type="match status" value="1"/>
</dbReference>
<dbReference type="Gene3D" id="2.40.50.100">
    <property type="match status" value="3"/>
</dbReference>
<dbReference type="Gene3D" id="4.10.860.120">
    <property type="entry name" value="RNA polymerase II, clamp domain"/>
    <property type="match status" value="1"/>
</dbReference>
<dbReference type="Gene3D" id="1.10.274.100">
    <property type="entry name" value="RNA polymerase Rpb1, domain 3"/>
    <property type="match status" value="1"/>
</dbReference>
<dbReference type="HAMAP" id="MF_01322">
    <property type="entry name" value="RNApol_bact_RpoC"/>
    <property type="match status" value="1"/>
</dbReference>
<dbReference type="InterPro" id="IPR045867">
    <property type="entry name" value="DNA-dir_RpoC_beta_prime"/>
</dbReference>
<dbReference type="InterPro" id="IPR012754">
    <property type="entry name" value="DNA-dir_RpoC_beta_prime_bact"/>
</dbReference>
<dbReference type="InterPro" id="IPR000722">
    <property type="entry name" value="RNA_pol_asu"/>
</dbReference>
<dbReference type="InterPro" id="IPR006592">
    <property type="entry name" value="RNA_pol_N"/>
</dbReference>
<dbReference type="InterPro" id="IPR007080">
    <property type="entry name" value="RNA_pol_Rpb1_1"/>
</dbReference>
<dbReference type="InterPro" id="IPR007066">
    <property type="entry name" value="RNA_pol_Rpb1_3"/>
</dbReference>
<dbReference type="InterPro" id="IPR042102">
    <property type="entry name" value="RNA_pol_Rpb1_3_sf"/>
</dbReference>
<dbReference type="InterPro" id="IPR007083">
    <property type="entry name" value="RNA_pol_Rpb1_4"/>
</dbReference>
<dbReference type="InterPro" id="IPR007081">
    <property type="entry name" value="RNA_pol_Rpb1_5"/>
</dbReference>
<dbReference type="InterPro" id="IPR044893">
    <property type="entry name" value="RNA_pol_Rpb1_clamp_domain"/>
</dbReference>
<dbReference type="InterPro" id="IPR038120">
    <property type="entry name" value="Rpb1_funnel_sf"/>
</dbReference>
<dbReference type="NCBIfam" id="TIGR02386">
    <property type="entry name" value="rpoC_TIGR"/>
    <property type="match status" value="1"/>
</dbReference>
<dbReference type="PANTHER" id="PTHR19376">
    <property type="entry name" value="DNA-DIRECTED RNA POLYMERASE"/>
    <property type="match status" value="1"/>
</dbReference>
<dbReference type="PANTHER" id="PTHR19376:SF54">
    <property type="entry name" value="DNA-DIRECTED RNA POLYMERASE SUBUNIT BETA"/>
    <property type="match status" value="1"/>
</dbReference>
<dbReference type="Pfam" id="PF04997">
    <property type="entry name" value="RNA_pol_Rpb1_1"/>
    <property type="match status" value="1"/>
</dbReference>
<dbReference type="Pfam" id="PF00623">
    <property type="entry name" value="RNA_pol_Rpb1_2"/>
    <property type="match status" value="2"/>
</dbReference>
<dbReference type="Pfam" id="PF04983">
    <property type="entry name" value="RNA_pol_Rpb1_3"/>
    <property type="match status" value="1"/>
</dbReference>
<dbReference type="Pfam" id="PF05000">
    <property type="entry name" value="RNA_pol_Rpb1_4"/>
    <property type="match status" value="1"/>
</dbReference>
<dbReference type="Pfam" id="PF04998">
    <property type="entry name" value="RNA_pol_Rpb1_5"/>
    <property type="match status" value="1"/>
</dbReference>
<dbReference type="SMART" id="SM00663">
    <property type="entry name" value="RPOLA_N"/>
    <property type="match status" value="1"/>
</dbReference>
<dbReference type="SUPFAM" id="SSF64484">
    <property type="entry name" value="beta and beta-prime subunits of DNA dependent RNA-polymerase"/>
    <property type="match status" value="1"/>
</dbReference>
<gene>
    <name evidence="1" type="primary">rpoC</name>
    <name type="ordered locus">VV1_1212</name>
</gene>
<keyword id="KW-0240">DNA-directed RNA polymerase</keyword>
<keyword id="KW-0460">Magnesium</keyword>
<keyword id="KW-0479">Metal-binding</keyword>
<keyword id="KW-0548">Nucleotidyltransferase</keyword>
<keyword id="KW-0804">Transcription</keyword>
<keyword id="KW-0808">Transferase</keyword>
<keyword id="KW-0862">Zinc</keyword>
<proteinExistence type="inferred from homology"/>
<organism>
    <name type="scientific">Vibrio vulnificus (strain CMCP6)</name>
    <dbReference type="NCBI Taxonomy" id="216895"/>
    <lineage>
        <taxon>Bacteria</taxon>
        <taxon>Pseudomonadati</taxon>
        <taxon>Pseudomonadota</taxon>
        <taxon>Gammaproteobacteria</taxon>
        <taxon>Vibrionales</taxon>
        <taxon>Vibrionaceae</taxon>
        <taxon>Vibrio</taxon>
    </lineage>
</organism>
<accession>Q8DD19</accession>
<feature type="chain" id="PRO_0000067829" description="DNA-directed RNA polymerase subunit beta'">
    <location>
        <begin position="1"/>
        <end position="1400"/>
    </location>
</feature>
<feature type="binding site" evidence="1">
    <location>
        <position position="70"/>
    </location>
    <ligand>
        <name>Zn(2+)</name>
        <dbReference type="ChEBI" id="CHEBI:29105"/>
        <label>1</label>
    </ligand>
</feature>
<feature type="binding site" evidence="1">
    <location>
        <position position="72"/>
    </location>
    <ligand>
        <name>Zn(2+)</name>
        <dbReference type="ChEBI" id="CHEBI:29105"/>
        <label>1</label>
    </ligand>
</feature>
<feature type="binding site" evidence="1">
    <location>
        <position position="85"/>
    </location>
    <ligand>
        <name>Zn(2+)</name>
        <dbReference type="ChEBI" id="CHEBI:29105"/>
        <label>1</label>
    </ligand>
</feature>
<feature type="binding site" evidence="1">
    <location>
        <position position="88"/>
    </location>
    <ligand>
        <name>Zn(2+)</name>
        <dbReference type="ChEBI" id="CHEBI:29105"/>
        <label>1</label>
    </ligand>
</feature>
<feature type="binding site" evidence="1">
    <location>
        <position position="460"/>
    </location>
    <ligand>
        <name>Mg(2+)</name>
        <dbReference type="ChEBI" id="CHEBI:18420"/>
    </ligand>
</feature>
<feature type="binding site" evidence="1">
    <location>
        <position position="462"/>
    </location>
    <ligand>
        <name>Mg(2+)</name>
        <dbReference type="ChEBI" id="CHEBI:18420"/>
    </ligand>
</feature>
<feature type="binding site" evidence="1">
    <location>
        <position position="464"/>
    </location>
    <ligand>
        <name>Mg(2+)</name>
        <dbReference type="ChEBI" id="CHEBI:18420"/>
    </ligand>
</feature>
<feature type="binding site" evidence="1">
    <location>
        <position position="814"/>
    </location>
    <ligand>
        <name>Zn(2+)</name>
        <dbReference type="ChEBI" id="CHEBI:29105"/>
        <label>2</label>
    </ligand>
</feature>
<feature type="binding site" evidence="1">
    <location>
        <position position="888"/>
    </location>
    <ligand>
        <name>Zn(2+)</name>
        <dbReference type="ChEBI" id="CHEBI:29105"/>
        <label>2</label>
    </ligand>
</feature>
<feature type="binding site" evidence="1">
    <location>
        <position position="895"/>
    </location>
    <ligand>
        <name>Zn(2+)</name>
        <dbReference type="ChEBI" id="CHEBI:29105"/>
        <label>2</label>
    </ligand>
</feature>
<feature type="binding site" evidence="1">
    <location>
        <position position="898"/>
    </location>
    <ligand>
        <name>Zn(2+)</name>
        <dbReference type="ChEBI" id="CHEBI:29105"/>
        <label>2</label>
    </ligand>
</feature>
<evidence type="ECO:0000255" key="1">
    <source>
        <dbReference type="HAMAP-Rule" id="MF_01322"/>
    </source>
</evidence>